<keyword id="KW-0238">DNA-binding</keyword>
<keyword id="KW-0804">Transcription</keyword>
<keyword id="KW-0805">Transcription regulation</keyword>
<reference key="1">
    <citation type="submission" date="2002-12" db="EMBL/GenBank/DDBJ databases">
        <title>Complete genome sequence of Vibrio vulnificus CMCP6.</title>
        <authorList>
            <person name="Rhee J.H."/>
            <person name="Kim S.Y."/>
            <person name="Chung S.S."/>
            <person name="Kim J.J."/>
            <person name="Moon Y.H."/>
            <person name="Jeong H."/>
            <person name="Choy H.E."/>
        </authorList>
    </citation>
    <scope>NUCLEOTIDE SEQUENCE [LARGE SCALE GENOMIC DNA]</scope>
    <source>
        <strain>CMCP6</strain>
    </source>
</reference>
<dbReference type="EMBL" id="AE016795">
    <property type="protein sequence ID" value="AAO09362.2"/>
    <property type="molecule type" value="Genomic_DNA"/>
</dbReference>
<dbReference type="RefSeq" id="WP_011078926.1">
    <property type="nucleotide sequence ID" value="NC_004459.3"/>
</dbReference>
<dbReference type="SMR" id="Q8DDU7"/>
<dbReference type="GeneID" id="93895157"/>
<dbReference type="KEGG" id="vvu:VV1_0859"/>
<dbReference type="HOGENOM" id="CLU_101379_3_0_6"/>
<dbReference type="Proteomes" id="UP000002275">
    <property type="component" value="Chromosome 1"/>
</dbReference>
<dbReference type="GO" id="GO:0003677">
    <property type="term" value="F:DNA binding"/>
    <property type="evidence" value="ECO:0007669"/>
    <property type="project" value="UniProtKB-UniRule"/>
</dbReference>
<dbReference type="GO" id="GO:0070063">
    <property type="term" value="F:RNA polymerase binding"/>
    <property type="evidence" value="ECO:0007669"/>
    <property type="project" value="InterPro"/>
</dbReference>
<dbReference type="GO" id="GO:0006354">
    <property type="term" value="P:DNA-templated transcription elongation"/>
    <property type="evidence" value="ECO:0007669"/>
    <property type="project" value="TreeGrafter"/>
</dbReference>
<dbReference type="GO" id="GO:0032784">
    <property type="term" value="P:regulation of DNA-templated transcription elongation"/>
    <property type="evidence" value="ECO:0007669"/>
    <property type="project" value="UniProtKB-UniRule"/>
</dbReference>
<dbReference type="FunFam" id="1.10.287.180:FF:000001">
    <property type="entry name" value="Transcription elongation factor GreA"/>
    <property type="match status" value="1"/>
</dbReference>
<dbReference type="FunFam" id="3.10.50.30:FF:000001">
    <property type="entry name" value="Transcription elongation factor GreA"/>
    <property type="match status" value="1"/>
</dbReference>
<dbReference type="Gene3D" id="3.10.50.30">
    <property type="entry name" value="Transcription elongation factor, GreA/GreB, C-terminal domain"/>
    <property type="match status" value="1"/>
</dbReference>
<dbReference type="Gene3D" id="1.10.287.180">
    <property type="entry name" value="Transcription elongation factor, GreA/GreB, N-terminal domain"/>
    <property type="match status" value="1"/>
</dbReference>
<dbReference type="HAMAP" id="MF_00105">
    <property type="entry name" value="GreA_GreB"/>
    <property type="match status" value="1"/>
</dbReference>
<dbReference type="HAMAP" id="MF_00930">
    <property type="entry name" value="GreB"/>
    <property type="match status" value="1"/>
</dbReference>
<dbReference type="InterPro" id="IPR036953">
    <property type="entry name" value="GreA/GreB_C_sf"/>
</dbReference>
<dbReference type="InterPro" id="IPR018151">
    <property type="entry name" value="TF_GreA/GreB_CS"/>
</dbReference>
<dbReference type="InterPro" id="IPR028624">
    <property type="entry name" value="Tscrpt_elong_fac_GreA/B"/>
</dbReference>
<dbReference type="InterPro" id="IPR001437">
    <property type="entry name" value="Tscrpt_elong_fac_GreA/B_C"/>
</dbReference>
<dbReference type="InterPro" id="IPR023459">
    <property type="entry name" value="Tscrpt_elong_fac_GreA/B_fam"/>
</dbReference>
<dbReference type="InterPro" id="IPR022691">
    <property type="entry name" value="Tscrpt_elong_fac_GreA/B_N"/>
</dbReference>
<dbReference type="InterPro" id="IPR036805">
    <property type="entry name" value="Tscrpt_elong_fac_GreA/B_N_sf"/>
</dbReference>
<dbReference type="InterPro" id="IPR006358">
    <property type="entry name" value="Tscrpt_elong_fac_GreB"/>
</dbReference>
<dbReference type="NCBIfam" id="TIGR01461">
    <property type="entry name" value="greB"/>
    <property type="match status" value="1"/>
</dbReference>
<dbReference type="NCBIfam" id="NF002506">
    <property type="entry name" value="PRK01885.1"/>
    <property type="match status" value="1"/>
</dbReference>
<dbReference type="PANTHER" id="PTHR30437">
    <property type="entry name" value="TRANSCRIPTION ELONGATION FACTOR GREA"/>
    <property type="match status" value="1"/>
</dbReference>
<dbReference type="PANTHER" id="PTHR30437:SF6">
    <property type="entry name" value="TRANSCRIPTION ELONGATION FACTOR GREB"/>
    <property type="match status" value="1"/>
</dbReference>
<dbReference type="Pfam" id="PF01272">
    <property type="entry name" value="GreA_GreB"/>
    <property type="match status" value="1"/>
</dbReference>
<dbReference type="Pfam" id="PF03449">
    <property type="entry name" value="GreA_GreB_N"/>
    <property type="match status" value="1"/>
</dbReference>
<dbReference type="PIRSF" id="PIRSF006092">
    <property type="entry name" value="GreA_GreB"/>
    <property type="match status" value="1"/>
</dbReference>
<dbReference type="SUPFAM" id="SSF54534">
    <property type="entry name" value="FKBP-like"/>
    <property type="match status" value="1"/>
</dbReference>
<dbReference type="SUPFAM" id="SSF46557">
    <property type="entry name" value="GreA transcript cleavage protein, N-terminal domain"/>
    <property type="match status" value="1"/>
</dbReference>
<dbReference type="PROSITE" id="PS00829">
    <property type="entry name" value="GREAB_1"/>
    <property type="match status" value="1"/>
</dbReference>
<dbReference type="PROSITE" id="PS00830">
    <property type="entry name" value="GREAB_2"/>
    <property type="match status" value="1"/>
</dbReference>
<evidence type="ECO:0000255" key="1">
    <source>
        <dbReference type="HAMAP-Rule" id="MF_00930"/>
    </source>
</evidence>
<name>GREB_VIBVU</name>
<gene>
    <name evidence="1" type="primary">greB</name>
    <name type="ordered locus">VV1_0859</name>
</gene>
<feature type="chain" id="PRO_0000176994" description="Transcription elongation factor GreB">
    <location>
        <begin position="1"/>
        <end position="160"/>
    </location>
</feature>
<protein>
    <recommendedName>
        <fullName evidence="1">Transcription elongation factor GreB</fullName>
    </recommendedName>
    <alternativeName>
        <fullName evidence="1">Transcript cleavage factor GreB</fullName>
    </alternativeName>
</protein>
<sequence length="160" mass="18712">MKTKMITREGYNKLKQELDYLWKEHRPEITQKVSWAASLGDRSENADYTYNKRLLRQIDRRVRFLSKFLPEVKIVDYAPQQEGKVFFGAWVEIENEAGEVMKFRIVGPEEIYGDAKGYISIDSPMARALLKKEVDDEVQVPTPSGIKEWFINSIEYDKGE</sequence>
<accession>Q8DDU7</accession>
<comment type="function">
    <text evidence="1">Necessary for efficient RNA polymerase transcription elongation past template-encoded arresting sites. The arresting sites in DNA have the property of trapping a certain fraction of elongating RNA polymerases that pass through, resulting in locked ternary complexes. Cleavage of the nascent transcript by cleavage factors such as GreA or GreB allows the resumption of elongation from the new 3'terminus. GreB releases sequences of up to 9 nucleotides in length.</text>
</comment>
<comment type="similarity">
    <text evidence="1">Belongs to the GreA/GreB family. GreB subfamily.</text>
</comment>
<proteinExistence type="inferred from homology"/>
<organism>
    <name type="scientific">Vibrio vulnificus (strain CMCP6)</name>
    <dbReference type="NCBI Taxonomy" id="216895"/>
    <lineage>
        <taxon>Bacteria</taxon>
        <taxon>Pseudomonadati</taxon>
        <taxon>Pseudomonadota</taxon>
        <taxon>Gammaproteobacteria</taxon>
        <taxon>Vibrionales</taxon>
        <taxon>Vibrionaceae</taxon>
        <taxon>Vibrio</taxon>
    </lineage>
</organism>